<comment type="similarity">
    <text evidence="1">Belongs to the eukaryotic ribosomal protein eS7 family.</text>
</comment>
<gene>
    <name type="primary">RpS7</name>
</gene>
<keyword id="KW-0687">Ribonucleoprotein</keyword>
<keyword id="KW-0689">Ribosomal protein</keyword>
<accession>P48155</accession>
<evidence type="ECO:0000305" key="1"/>
<proteinExistence type="evidence at transcript level"/>
<reference key="1">
    <citation type="journal article" date="1996" name="Insect Mol. Biol.">
        <title>Primary structure of ribosomal proteins S3 and S7 from Manduca sexta.</title>
        <authorList>
            <person name="Jiang H."/>
            <person name="Wang Y."/>
            <person name="Kanost M.R."/>
        </authorList>
    </citation>
    <scope>NUCLEOTIDE SEQUENCE [MRNA]</scope>
    <source>
        <tissue>Fat body</tissue>
    </source>
</reference>
<feature type="chain" id="PRO_0000174202" description="Small ribosomal subunit protein eS7">
    <location>
        <begin position="1"/>
        <end position="190"/>
    </location>
</feature>
<sequence>MSTKILKAGGTEADSFETSISQALVELETNSDLKAQLRELYITKAKEIELHNKKSIIIYVPMPKLKAFQKIQIRLVRELEKKFSGKHVVFIGDRKILPKPSHKTRVANKQKRPRSRTLTSVYDAILEDLVFPAEIVGKRIRVKLDGSQLIKVHLDKNQQTTIEHKVDTFQSVYKKLTGREVTFEFPEPYL</sequence>
<dbReference type="EMBL" id="L20096">
    <property type="protein sequence ID" value="AAA20402.1"/>
    <property type="molecule type" value="mRNA"/>
</dbReference>
<dbReference type="SMR" id="P48155"/>
<dbReference type="EnsemblMetazoa" id="XM_037442677.1">
    <property type="protein sequence ID" value="XP_037298574.1"/>
    <property type="gene ID" value="LOC115452401"/>
</dbReference>
<dbReference type="EnsemblMetazoa" id="XM_037442682.1">
    <property type="protein sequence ID" value="XP_037298579.1"/>
    <property type="gene ID" value="LOC115452401"/>
</dbReference>
<dbReference type="OrthoDB" id="1724687at2759"/>
<dbReference type="GO" id="GO:0030686">
    <property type="term" value="C:90S preribosome"/>
    <property type="evidence" value="ECO:0007669"/>
    <property type="project" value="TreeGrafter"/>
</dbReference>
<dbReference type="GO" id="GO:0022627">
    <property type="term" value="C:cytosolic small ribosomal subunit"/>
    <property type="evidence" value="ECO:0007669"/>
    <property type="project" value="TreeGrafter"/>
</dbReference>
<dbReference type="GO" id="GO:0032040">
    <property type="term" value="C:small-subunit processome"/>
    <property type="evidence" value="ECO:0007669"/>
    <property type="project" value="TreeGrafter"/>
</dbReference>
<dbReference type="GO" id="GO:0003735">
    <property type="term" value="F:structural constituent of ribosome"/>
    <property type="evidence" value="ECO:0007669"/>
    <property type="project" value="InterPro"/>
</dbReference>
<dbReference type="GO" id="GO:0042274">
    <property type="term" value="P:ribosomal small subunit biogenesis"/>
    <property type="evidence" value="ECO:0007669"/>
    <property type="project" value="TreeGrafter"/>
</dbReference>
<dbReference type="GO" id="GO:0006364">
    <property type="term" value="P:rRNA processing"/>
    <property type="evidence" value="ECO:0007669"/>
    <property type="project" value="TreeGrafter"/>
</dbReference>
<dbReference type="GO" id="GO:0006412">
    <property type="term" value="P:translation"/>
    <property type="evidence" value="ECO:0007669"/>
    <property type="project" value="InterPro"/>
</dbReference>
<dbReference type="InterPro" id="IPR000554">
    <property type="entry name" value="Ribosomal_eS7"/>
</dbReference>
<dbReference type="InterPro" id="IPR047861">
    <property type="entry name" value="Ribosomal_eS7_CS"/>
</dbReference>
<dbReference type="PANTHER" id="PTHR11278">
    <property type="entry name" value="40S RIBOSOMAL PROTEIN S7"/>
    <property type="match status" value="1"/>
</dbReference>
<dbReference type="PANTHER" id="PTHR11278:SF0">
    <property type="entry name" value="SMALL RIBOSOMAL SUBUNIT PROTEIN ES7"/>
    <property type="match status" value="1"/>
</dbReference>
<dbReference type="Pfam" id="PF01251">
    <property type="entry name" value="Ribosomal_S7e"/>
    <property type="match status" value="1"/>
</dbReference>
<dbReference type="PROSITE" id="PS00948">
    <property type="entry name" value="RIBOSOMAL_S7E"/>
    <property type="match status" value="1"/>
</dbReference>
<protein>
    <recommendedName>
        <fullName evidence="1">Small ribosomal subunit protein eS7</fullName>
    </recommendedName>
    <alternativeName>
        <fullName>40S ribosomal protein S7</fullName>
    </alternativeName>
</protein>
<organism>
    <name type="scientific">Manduca sexta</name>
    <name type="common">Tobacco hawkmoth</name>
    <name type="synonym">Tobacco hornworm</name>
    <dbReference type="NCBI Taxonomy" id="7130"/>
    <lineage>
        <taxon>Eukaryota</taxon>
        <taxon>Metazoa</taxon>
        <taxon>Ecdysozoa</taxon>
        <taxon>Arthropoda</taxon>
        <taxon>Hexapoda</taxon>
        <taxon>Insecta</taxon>
        <taxon>Pterygota</taxon>
        <taxon>Neoptera</taxon>
        <taxon>Endopterygota</taxon>
        <taxon>Lepidoptera</taxon>
        <taxon>Glossata</taxon>
        <taxon>Ditrysia</taxon>
        <taxon>Bombycoidea</taxon>
        <taxon>Sphingidae</taxon>
        <taxon>Sphinginae</taxon>
        <taxon>Sphingini</taxon>
        <taxon>Manduca</taxon>
    </lineage>
</organism>
<name>RS7_MANSE</name>